<dbReference type="EC" id="4.2.1.20" evidence="1"/>
<dbReference type="EMBL" id="CP000110">
    <property type="protein sequence ID" value="ABB36150.1"/>
    <property type="molecule type" value="Genomic_DNA"/>
</dbReference>
<dbReference type="RefSeq" id="WP_011365346.1">
    <property type="nucleotide sequence ID" value="NC_007516.1"/>
</dbReference>
<dbReference type="SMR" id="Q3AGY2"/>
<dbReference type="STRING" id="110662.Syncc9605_2418"/>
<dbReference type="KEGG" id="syd:Syncc9605_2418"/>
<dbReference type="eggNOG" id="COG0133">
    <property type="taxonomic scope" value="Bacteria"/>
</dbReference>
<dbReference type="HOGENOM" id="CLU_016734_3_1_3"/>
<dbReference type="OrthoDB" id="9766131at2"/>
<dbReference type="UniPathway" id="UPA00035">
    <property type="reaction ID" value="UER00044"/>
</dbReference>
<dbReference type="GO" id="GO:0005737">
    <property type="term" value="C:cytoplasm"/>
    <property type="evidence" value="ECO:0007669"/>
    <property type="project" value="TreeGrafter"/>
</dbReference>
<dbReference type="GO" id="GO:0004834">
    <property type="term" value="F:tryptophan synthase activity"/>
    <property type="evidence" value="ECO:0007669"/>
    <property type="project" value="UniProtKB-UniRule"/>
</dbReference>
<dbReference type="CDD" id="cd06446">
    <property type="entry name" value="Trp-synth_B"/>
    <property type="match status" value="1"/>
</dbReference>
<dbReference type="FunFam" id="3.40.50.1100:FF:000001">
    <property type="entry name" value="Tryptophan synthase beta chain"/>
    <property type="match status" value="1"/>
</dbReference>
<dbReference type="FunFam" id="3.40.50.1100:FF:000004">
    <property type="entry name" value="Tryptophan synthase beta chain"/>
    <property type="match status" value="1"/>
</dbReference>
<dbReference type="Gene3D" id="3.40.50.1100">
    <property type="match status" value="2"/>
</dbReference>
<dbReference type="HAMAP" id="MF_00133">
    <property type="entry name" value="Trp_synth_beta"/>
    <property type="match status" value="1"/>
</dbReference>
<dbReference type="InterPro" id="IPR006653">
    <property type="entry name" value="Trp_synth_b_CS"/>
</dbReference>
<dbReference type="InterPro" id="IPR006654">
    <property type="entry name" value="Trp_synth_beta"/>
</dbReference>
<dbReference type="InterPro" id="IPR023026">
    <property type="entry name" value="Trp_synth_beta/beta-like"/>
</dbReference>
<dbReference type="InterPro" id="IPR001926">
    <property type="entry name" value="TrpB-like_PALP"/>
</dbReference>
<dbReference type="InterPro" id="IPR036052">
    <property type="entry name" value="TrpB-like_PALP_sf"/>
</dbReference>
<dbReference type="NCBIfam" id="TIGR00263">
    <property type="entry name" value="trpB"/>
    <property type="match status" value="1"/>
</dbReference>
<dbReference type="PANTHER" id="PTHR48077:SF3">
    <property type="entry name" value="TRYPTOPHAN SYNTHASE"/>
    <property type="match status" value="1"/>
</dbReference>
<dbReference type="PANTHER" id="PTHR48077">
    <property type="entry name" value="TRYPTOPHAN SYNTHASE-RELATED"/>
    <property type="match status" value="1"/>
</dbReference>
<dbReference type="Pfam" id="PF00291">
    <property type="entry name" value="PALP"/>
    <property type="match status" value="1"/>
</dbReference>
<dbReference type="PIRSF" id="PIRSF001413">
    <property type="entry name" value="Trp_syn_beta"/>
    <property type="match status" value="1"/>
</dbReference>
<dbReference type="SUPFAM" id="SSF53686">
    <property type="entry name" value="Tryptophan synthase beta subunit-like PLP-dependent enzymes"/>
    <property type="match status" value="1"/>
</dbReference>
<dbReference type="PROSITE" id="PS00168">
    <property type="entry name" value="TRP_SYNTHASE_BETA"/>
    <property type="match status" value="1"/>
</dbReference>
<gene>
    <name evidence="1" type="primary">trpB</name>
    <name type="ordered locus">Syncc9605_2418</name>
</gene>
<comment type="function">
    <text evidence="1">The beta subunit is responsible for the synthesis of L-tryptophan from indole and L-serine.</text>
</comment>
<comment type="catalytic activity">
    <reaction evidence="1">
        <text>(1S,2R)-1-C-(indol-3-yl)glycerol 3-phosphate + L-serine = D-glyceraldehyde 3-phosphate + L-tryptophan + H2O</text>
        <dbReference type="Rhea" id="RHEA:10532"/>
        <dbReference type="ChEBI" id="CHEBI:15377"/>
        <dbReference type="ChEBI" id="CHEBI:33384"/>
        <dbReference type="ChEBI" id="CHEBI:57912"/>
        <dbReference type="ChEBI" id="CHEBI:58866"/>
        <dbReference type="ChEBI" id="CHEBI:59776"/>
        <dbReference type="EC" id="4.2.1.20"/>
    </reaction>
</comment>
<comment type="cofactor">
    <cofactor evidence="1">
        <name>pyridoxal 5'-phosphate</name>
        <dbReference type="ChEBI" id="CHEBI:597326"/>
    </cofactor>
</comment>
<comment type="pathway">
    <text evidence="1">Amino-acid biosynthesis; L-tryptophan biosynthesis; L-tryptophan from chorismate: step 5/5.</text>
</comment>
<comment type="subunit">
    <text evidence="1">Tetramer of two alpha and two beta chains.</text>
</comment>
<comment type="similarity">
    <text evidence="1">Belongs to the TrpB family.</text>
</comment>
<organism>
    <name type="scientific">Synechococcus sp. (strain CC9605)</name>
    <dbReference type="NCBI Taxonomy" id="110662"/>
    <lineage>
        <taxon>Bacteria</taxon>
        <taxon>Bacillati</taxon>
        <taxon>Cyanobacteriota</taxon>
        <taxon>Cyanophyceae</taxon>
        <taxon>Synechococcales</taxon>
        <taxon>Synechococcaceae</taxon>
        <taxon>Synechococcus</taxon>
    </lineage>
</organism>
<reference key="1">
    <citation type="submission" date="2005-07" db="EMBL/GenBank/DDBJ databases">
        <title>Complete sequence of Synechococcus sp. CC9605.</title>
        <authorList>
            <consortium name="US DOE Joint Genome Institute"/>
            <person name="Copeland A."/>
            <person name="Lucas S."/>
            <person name="Lapidus A."/>
            <person name="Barry K."/>
            <person name="Detter J.C."/>
            <person name="Glavina T."/>
            <person name="Hammon N."/>
            <person name="Israni S."/>
            <person name="Pitluck S."/>
            <person name="Schmutz J."/>
            <person name="Martinez M."/>
            <person name="Larimer F."/>
            <person name="Land M."/>
            <person name="Kyrpides N."/>
            <person name="Ivanova N."/>
            <person name="Richardson P."/>
        </authorList>
    </citation>
    <scope>NUCLEOTIDE SEQUENCE [LARGE SCALE GENOMIC DNA]</scope>
    <source>
        <strain>CC9605</strain>
    </source>
</reference>
<proteinExistence type="inferred from homology"/>
<sequence>MTSTLPNASTPDPSSLQPAVRPGAHGRFGRFGGQYVPETLMPALAELEQAAAQAWNDPAFTDELNRLLKNYVGRATPLYEAERLTAHYRRADGGPRIWLKREDLNHTGAHKINNALGQALLALRMGKKRIIAETGAGQHGVATATVCARFGLECVIYMGAEDMRRQALNVFRMRLLGATVQPVTAGTATLKDATSEAIRDWVTNVETTHYILGSVAGPHPYPMLVRDFHAVIGEESKQQCQEAFGRLPDVLMACVGGGSNAMGLFHPFVQDMSVRLIGVEAAGDGVASGRHAATITEGRAGVLHGAMSLLLQDGDGQVMEAHSISAGLDYPGVGPEHSYLREIGRAEYAAVTDQQALDALRLVSELEGIIPALETAHAFAWLEQLCPTLADGTEVVINCSGRGDKDVNTVAEKLGDQL</sequence>
<name>TRPB_SYNSC</name>
<keyword id="KW-0028">Amino-acid biosynthesis</keyword>
<keyword id="KW-0057">Aromatic amino acid biosynthesis</keyword>
<keyword id="KW-0456">Lyase</keyword>
<keyword id="KW-0663">Pyridoxal phosphate</keyword>
<keyword id="KW-0822">Tryptophan biosynthesis</keyword>
<accession>Q3AGY2</accession>
<protein>
    <recommendedName>
        <fullName evidence="1">Tryptophan synthase beta chain</fullName>
        <ecNumber evidence="1">4.2.1.20</ecNumber>
    </recommendedName>
</protein>
<evidence type="ECO:0000255" key="1">
    <source>
        <dbReference type="HAMAP-Rule" id="MF_00133"/>
    </source>
</evidence>
<evidence type="ECO:0000256" key="2">
    <source>
        <dbReference type="SAM" id="MobiDB-lite"/>
    </source>
</evidence>
<feature type="chain" id="PRO_1000018416" description="Tryptophan synthase beta chain">
    <location>
        <begin position="1"/>
        <end position="418"/>
    </location>
</feature>
<feature type="region of interest" description="Disordered" evidence="2">
    <location>
        <begin position="1"/>
        <end position="23"/>
    </location>
</feature>
<feature type="compositionally biased region" description="Polar residues" evidence="2">
    <location>
        <begin position="1"/>
        <end position="17"/>
    </location>
</feature>
<feature type="modified residue" description="N6-(pyridoxal phosphate)lysine" evidence="1">
    <location>
        <position position="111"/>
    </location>
</feature>